<sequence>MMYQNICIMIIMLPLASSIINGLFLRVIDKKLAQVIATGFLSLSALFSLIIFCDTGLDGNIIHIKLLPWIEVGTFKVNWSIYIDQLTSIMFIAVTWVSSIVHIYSLGYMAEDKGIIRFLSFLSLFTFFMLMLVSSDNFLQLFFGWEGVGVCSYLLIGFWYSKESANKAAIKAFIINRASDFAFILGVITIIVYCGSANYKDVLSSAELLSNIKIFLHFSILDIICLLLFIGCMGKSAQIGLHVWLPDAMEGPTPVSALIHAATMVTAGVFLVARCSYLFEYSPLILQFITIIGGVTCLFAASIAIMHSDIKKIIAYSTCSQLGYMFMACGVSAYNSGIFHLVTHAFFKALLFLSAGSVIHAVHEQDIFKMGDLRNKMPVTYGNFLIGSLALIGIYPLAGFYSKDSILEAAYSSGSFMFIFGIAAAILTAIYSMKIIMLVFHGKTKLEKDVFEHAHEPAKVMNNPLILLVVGSFFSGMIGYYLLAMDKPNGYFHASLFNLHIYKLLISHPPLYIKLLPMAVGIVGIVTGIYLYKSSTVMSFPQKRKSSKNIKNAWILRSSRGMTPLVLISNILRNKYYFDEIYNCLIVKPINCLASLFYLGDQQIIDRFGPNGFSRVVNCFSVLTGKIQTGYVFNYALYIVSFIVVTISYFVWKNIMY</sequence>
<organism>
    <name type="scientific">Rickettsia conorii (strain ATCC VR-613 / Malish 7)</name>
    <dbReference type="NCBI Taxonomy" id="272944"/>
    <lineage>
        <taxon>Bacteria</taxon>
        <taxon>Pseudomonadati</taxon>
        <taxon>Pseudomonadota</taxon>
        <taxon>Alphaproteobacteria</taxon>
        <taxon>Rickettsiales</taxon>
        <taxon>Rickettsiaceae</taxon>
        <taxon>Rickettsieae</taxon>
        <taxon>Rickettsia</taxon>
        <taxon>spotted fever group</taxon>
    </lineage>
</organism>
<evidence type="ECO:0000250" key="1"/>
<evidence type="ECO:0000255" key="2"/>
<evidence type="ECO:0000305" key="3"/>
<reference key="1">
    <citation type="journal article" date="2001" name="Science">
        <title>Mechanisms of evolution in Rickettsia conorii and R. prowazekii.</title>
        <authorList>
            <person name="Ogata H."/>
            <person name="Audic S."/>
            <person name="Renesto-Audiffren P."/>
            <person name="Fournier P.-E."/>
            <person name="Barbe V."/>
            <person name="Samson D."/>
            <person name="Roux V."/>
            <person name="Cossart P."/>
            <person name="Weissenbach J."/>
            <person name="Claverie J.-M."/>
            <person name="Raoult D."/>
        </authorList>
    </citation>
    <scope>NUCLEOTIDE SEQUENCE [LARGE SCALE GENOMIC DNA]</scope>
    <source>
        <strain>ATCC VR-613 / Malish 7</strain>
    </source>
</reference>
<keyword id="KW-1003">Cell membrane</keyword>
<keyword id="KW-0472">Membrane</keyword>
<keyword id="KW-0520">NAD</keyword>
<keyword id="KW-0874">Quinone</keyword>
<keyword id="KW-1278">Translocase</keyword>
<keyword id="KW-0812">Transmembrane</keyword>
<keyword id="KW-1133">Transmembrane helix</keyword>
<dbReference type="EC" id="7.1.1.-"/>
<dbReference type="EMBL" id="AE006914">
    <property type="protein sequence ID" value="AAL03764.1"/>
    <property type="status" value="ALT_INIT"/>
    <property type="molecule type" value="Genomic_DNA"/>
</dbReference>
<dbReference type="PIR" id="B97853">
    <property type="entry name" value="B97853"/>
</dbReference>
<dbReference type="RefSeq" id="WP_041471749.1">
    <property type="nucleotide sequence ID" value="NC_003103.1"/>
</dbReference>
<dbReference type="SMR" id="Q92G97"/>
<dbReference type="GeneID" id="928379"/>
<dbReference type="KEGG" id="rco:RC1226"/>
<dbReference type="PATRIC" id="fig|272944.4.peg.1405"/>
<dbReference type="HOGENOM" id="CLU_007100_6_0_5"/>
<dbReference type="Proteomes" id="UP000000816">
    <property type="component" value="Chromosome"/>
</dbReference>
<dbReference type="GO" id="GO:0005886">
    <property type="term" value="C:plasma membrane"/>
    <property type="evidence" value="ECO:0007669"/>
    <property type="project" value="UniProtKB-SubCell"/>
</dbReference>
<dbReference type="GO" id="GO:0008137">
    <property type="term" value="F:NADH dehydrogenase (ubiquinone) activity"/>
    <property type="evidence" value="ECO:0007669"/>
    <property type="project" value="InterPro"/>
</dbReference>
<dbReference type="GO" id="GO:0048038">
    <property type="term" value="F:quinone binding"/>
    <property type="evidence" value="ECO:0007669"/>
    <property type="project" value="UniProtKB-KW"/>
</dbReference>
<dbReference type="GO" id="GO:0042773">
    <property type="term" value="P:ATP synthesis coupled electron transport"/>
    <property type="evidence" value="ECO:0007669"/>
    <property type="project" value="InterPro"/>
</dbReference>
<dbReference type="GO" id="GO:0015990">
    <property type="term" value="P:electron transport coupled proton transport"/>
    <property type="evidence" value="ECO:0007669"/>
    <property type="project" value="TreeGrafter"/>
</dbReference>
<dbReference type="Gene3D" id="1.20.5.2700">
    <property type="match status" value="1"/>
</dbReference>
<dbReference type="InterPro" id="IPR018393">
    <property type="entry name" value="NADHpl_OxRdtase_5_subgr"/>
</dbReference>
<dbReference type="InterPro" id="IPR001750">
    <property type="entry name" value="ND/Mrp_TM"/>
</dbReference>
<dbReference type="InterPro" id="IPR003945">
    <property type="entry name" value="NU5C-like"/>
</dbReference>
<dbReference type="InterPro" id="IPR001516">
    <property type="entry name" value="Proton_antipo_N"/>
</dbReference>
<dbReference type="NCBIfam" id="TIGR01974">
    <property type="entry name" value="NDH_I_L"/>
    <property type="match status" value="1"/>
</dbReference>
<dbReference type="NCBIfam" id="NF005141">
    <property type="entry name" value="PRK06590.1"/>
    <property type="match status" value="1"/>
</dbReference>
<dbReference type="PANTHER" id="PTHR42829">
    <property type="entry name" value="NADH-UBIQUINONE OXIDOREDUCTASE CHAIN 5"/>
    <property type="match status" value="1"/>
</dbReference>
<dbReference type="PANTHER" id="PTHR42829:SF2">
    <property type="entry name" value="NADH-UBIQUINONE OXIDOREDUCTASE CHAIN 5"/>
    <property type="match status" value="1"/>
</dbReference>
<dbReference type="Pfam" id="PF00361">
    <property type="entry name" value="Proton_antipo_M"/>
    <property type="match status" value="1"/>
</dbReference>
<dbReference type="Pfam" id="PF00662">
    <property type="entry name" value="Proton_antipo_N"/>
    <property type="match status" value="1"/>
</dbReference>
<dbReference type="PRINTS" id="PR01434">
    <property type="entry name" value="NADHDHGNASE5"/>
</dbReference>
<dbReference type="PRINTS" id="PR01435">
    <property type="entry name" value="NPOXDRDTASE5"/>
</dbReference>
<protein>
    <recommendedName>
        <fullName>NADH-quinone oxidoreductase subunit L</fullName>
        <ecNumber>7.1.1.-</ecNumber>
    </recommendedName>
    <alternativeName>
        <fullName>NADH dehydrogenase I subunit L</fullName>
    </alternativeName>
    <alternativeName>
        <fullName>NDH-1 subunit L</fullName>
    </alternativeName>
</protein>
<proteinExistence type="inferred from homology"/>
<feature type="chain" id="PRO_0000118222" description="NADH-quinone oxidoreductase subunit L">
    <location>
        <begin position="1"/>
        <end position="657"/>
    </location>
</feature>
<feature type="transmembrane region" description="Helical" evidence="2">
    <location>
        <begin position="5"/>
        <end position="25"/>
    </location>
</feature>
<feature type="transmembrane region" description="Helical" evidence="2">
    <location>
        <begin position="32"/>
        <end position="52"/>
    </location>
</feature>
<feature type="transmembrane region" description="Helical" evidence="2">
    <location>
        <begin position="89"/>
        <end position="109"/>
    </location>
</feature>
<feature type="transmembrane region" description="Helical" evidence="2">
    <location>
        <begin position="114"/>
        <end position="134"/>
    </location>
</feature>
<feature type="transmembrane region" description="Helical" evidence="2">
    <location>
        <begin position="138"/>
        <end position="158"/>
    </location>
</feature>
<feature type="transmembrane region" description="Helical" evidence="2">
    <location>
        <begin position="172"/>
        <end position="192"/>
    </location>
</feature>
<feature type="transmembrane region" description="Helical" evidence="2">
    <location>
        <begin position="214"/>
        <end position="234"/>
    </location>
</feature>
<feature type="transmembrane region" description="Helical" evidence="2">
    <location>
        <begin position="253"/>
        <end position="273"/>
    </location>
</feature>
<feature type="transmembrane region" description="Helical" evidence="2">
    <location>
        <begin position="285"/>
        <end position="305"/>
    </location>
</feature>
<feature type="transmembrane region" description="Helical" evidence="2">
    <location>
        <begin position="313"/>
        <end position="333"/>
    </location>
</feature>
<feature type="transmembrane region" description="Helical" evidence="2">
    <location>
        <begin position="339"/>
        <end position="359"/>
    </location>
</feature>
<feature type="transmembrane region" description="Helical" evidence="2">
    <location>
        <begin position="381"/>
        <end position="401"/>
    </location>
</feature>
<feature type="transmembrane region" description="Helical" evidence="2">
    <location>
        <begin position="416"/>
        <end position="436"/>
    </location>
</feature>
<feature type="transmembrane region" description="Helical" evidence="2">
    <location>
        <begin position="465"/>
        <end position="485"/>
    </location>
</feature>
<feature type="transmembrane region" description="Helical" evidence="2">
    <location>
        <begin position="511"/>
        <end position="531"/>
    </location>
</feature>
<feature type="transmembrane region" description="Helical" evidence="2">
    <location>
        <begin position="580"/>
        <end position="600"/>
    </location>
</feature>
<feature type="transmembrane region" description="Helical" evidence="2">
    <location>
        <begin position="632"/>
        <end position="652"/>
    </location>
</feature>
<name>NUOL_RICCN</name>
<accession>Q92G97</accession>
<gene>
    <name type="primary">nuoL</name>
    <name type="ordered locus">RC1226</name>
</gene>
<comment type="function">
    <text evidence="1">NDH-1 shuttles electrons from NADH, via FMN and iron-sulfur (Fe-S) centers, to quinones in the respiratory chain. Couples the redox reaction to proton translocation (for every two electrons transferred, four hydrogen ions are translocated across the cytoplasmic membrane), and thus conserves the redox energy in a proton gradient (By similarity).</text>
</comment>
<comment type="catalytic activity">
    <reaction>
        <text>a quinone + NADH + 5 H(+)(in) = a quinol + NAD(+) + 4 H(+)(out)</text>
        <dbReference type="Rhea" id="RHEA:57888"/>
        <dbReference type="ChEBI" id="CHEBI:15378"/>
        <dbReference type="ChEBI" id="CHEBI:24646"/>
        <dbReference type="ChEBI" id="CHEBI:57540"/>
        <dbReference type="ChEBI" id="CHEBI:57945"/>
        <dbReference type="ChEBI" id="CHEBI:132124"/>
    </reaction>
</comment>
<comment type="subcellular location">
    <subcellularLocation>
        <location evidence="3">Cell membrane</location>
        <topology evidence="3">Multi-pass membrane protein</topology>
    </subcellularLocation>
</comment>
<comment type="similarity">
    <text evidence="3">Belongs to the complex I subunit 5 family.</text>
</comment>
<comment type="sequence caution" evidence="3">
    <conflict type="erroneous initiation">
        <sequence resource="EMBL-CDS" id="AAL03764"/>
    </conflict>
</comment>